<keyword id="KW-0067">ATP-binding</keyword>
<keyword id="KW-0418">Kinase</keyword>
<keyword id="KW-0460">Magnesium</keyword>
<keyword id="KW-0479">Metal-binding</keyword>
<keyword id="KW-0546">Nucleotide metabolism</keyword>
<keyword id="KW-0547">Nucleotide-binding</keyword>
<keyword id="KW-0597">Phosphoprotein</keyword>
<keyword id="KW-1185">Reference proteome</keyword>
<keyword id="KW-0808">Transferase</keyword>
<sequence>MEQSFIMIKPDGVQRGLIGDIISRFEKKGFFLRGMKFMNVERSFAQQHYADLSDKPFFPGLVEYIISGPVVAMVWEGKDVVATGRRIIGATRPWEAAPGTIRADYAVEVGRNVIHGSDSVDNGKKEIALWFPEGLAEWRSNLHPWIYES</sequence>
<proteinExistence type="evidence at protein level"/>
<organism>
    <name type="scientific">Oryza sativa subsp. indica</name>
    <name type="common">Rice</name>
    <dbReference type="NCBI Taxonomy" id="39946"/>
    <lineage>
        <taxon>Eukaryota</taxon>
        <taxon>Viridiplantae</taxon>
        <taxon>Streptophyta</taxon>
        <taxon>Embryophyta</taxon>
        <taxon>Tracheophyta</taxon>
        <taxon>Spermatophyta</taxon>
        <taxon>Magnoliopsida</taxon>
        <taxon>Liliopsida</taxon>
        <taxon>Poales</taxon>
        <taxon>Poaceae</taxon>
        <taxon>BOP clade</taxon>
        <taxon>Oryzoideae</taxon>
        <taxon>Oryzeae</taxon>
        <taxon>Oryzinae</taxon>
        <taxon>Oryza</taxon>
        <taxon>Oryza sativa</taxon>
    </lineage>
</organism>
<reference key="1">
    <citation type="journal article" date="2005" name="PLoS Biol.">
        <title>The genomes of Oryza sativa: a history of duplications.</title>
        <authorList>
            <person name="Yu J."/>
            <person name="Wang J."/>
            <person name="Lin W."/>
            <person name="Li S."/>
            <person name="Li H."/>
            <person name="Zhou J."/>
            <person name="Ni P."/>
            <person name="Dong W."/>
            <person name="Hu S."/>
            <person name="Zeng C."/>
            <person name="Zhang J."/>
            <person name="Zhang Y."/>
            <person name="Li R."/>
            <person name="Xu Z."/>
            <person name="Li S."/>
            <person name="Li X."/>
            <person name="Zheng H."/>
            <person name="Cong L."/>
            <person name="Lin L."/>
            <person name="Yin J."/>
            <person name="Geng J."/>
            <person name="Li G."/>
            <person name="Shi J."/>
            <person name="Liu J."/>
            <person name="Lv H."/>
            <person name="Li J."/>
            <person name="Wang J."/>
            <person name="Deng Y."/>
            <person name="Ran L."/>
            <person name="Shi X."/>
            <person name="Wang X."/>
            <person name="Wu Q."/>
            <person name="Li C."/>
            <person name="Ren X."/>
            <person name="Wang J."/>
            <person name="Wang X."/>
            <person name="Li D."/>
            <person name="Liu D."/>
            <person name="Zhang X."/>
            <person name="Ji Z."/>
            <person name="Zhao W."/>
            <person name="Sun Y."/>
            <person name="Zhang Z."/>
            <person name="Bao J."/>
            <person name="Han Y."/>
            <person name="Dong L."/>
            <person name="Ji J."/>
            <person name="Chen P."/>
            <person name="Wu S."/>
            <person name="Liu J."/>
            <person name="Xiao Y."/>
            <person name="Bu D."/>
            <person name="Tan J."/>
            <person name="Yang L."/>
            <person name="Ye C."/>
            <person name="Zhang J."/>
            <person name="Xu J."/>
            <person name="Zhou Y."/>
            <person name="Yu Y."/>
            <person name="Zhang B."/>
            <person name="Zhuang S."/>
            <person name="Wei H."/>
            <person name="Liu B."/>
            <person name="Lei M."/>
            <person name="Yu H."/>
            <person name="Li Y."/>
            <person name="Xu H."/>
            <person name="Wei S."/>
            <person name="He X."/>
            <person name="Fang L."/>
            <person name="Zhang Z."/>
            <person name="Zhang Y."/>
            <person name="Huang X."/>
            <person name="Su Z."/>
            <person name="Tong W."/>
            <person name="Li J."/>
            <person name="Tong Z."/>
            <person name="Li S."/>
            <person name="Ye J."/>
            <person name="Wang L."/>
            <person name="Fang L."/>
            <person name="Lei T."/>
            <person name="Chen C.-S."/>
            <person name="Chen H.-C."/>
            <person name="Xu Z."/>
            <person name="Li H."/>
            <person name="Huang H."/>
            <person name="Zhang F."/>
            <person name="Xu H."/>
            <person name="Li N."/>
            <person name="Zhao C."/>
            <person name="Li S."/>
            <person name="Dong L."/>
            <person name="Huang Y."/>
            <person name="Li L."/>
            <person name="Xi Y."/>
            <person name="Qi Q."/>
            <person name="Li W."/>
            <person name="Zhang B."/>
            <person name="Hu W."/>
            <person name="Zhang Y."/>
            <person name="Tian X."/>
            <person name="Jiao Y."/>
            <person name="Liang X."/>
            <person name="Jin J."/>
            <person name="Gao L."/>
            <person name="Zheng W."/>
            <person name="Hao B."/>
            <person name="Liu S.-M."/>
            <person name="Wang W."/>
            <person name="Yuan L."/>
            <person name="Cao M."/>
            <person name="McDermott J."/>
            <person name="Samudrala R."/>
            <person name="Wang J."/>
            <person name="Wong G.K.-S."/>
            <person name="Yang H."/>
        </authorList>
    </citation>
    <scope>NUCLEOTIDE SEQUENCE [LARGE SCALE GENOMIC DNA]</scope>
    <source>
        <strain>cv. 93-11</strain>
    </source>
</reference>
<reference key="2">
    <citation type="submission" date="2007-04" db="EMBL/GenBank/DDBJ databases">
        <title>A comparative transcriptome map of early and late salinity stress responses in contrasting genotypes of Oryza sativa L.</title>
        <authorList>
            <person name="Kumari S."/>
            <person name="Panjabi V."/>
            <person name="Singla-Pareek S.L."/>
            <person name="Sopory S.K."/>
            <person name="Pareek A."/>
        </authorList>
    </citation>
    <scope>NUCLEOTIDE SEQUENCE [LARGE SCALE MRNA]</scope>
    <source>
        <strain>cv. Pokkali</strain>
        <tissue>Root</tissue>
    </source>
</reference>
<reference key="3">
    <citation type="journal article" date="2009" name="Proteome Sci.">
        <title>Understanding the molecular basis of plant growth promotional effect of Pseudomonas fluorescens on rice through protein profiling.</title>
        <authorList>
            <person name="Kandasamy S."/>
            <person name="Loganathan K."/>
            <person name="Muthuraj R."/>
            <person name="Duraisamy S."/>
            <person name="Seetharaman S."/>
            <person name="Thiruvengadam R."/>
            <person name="Ponnusamy B."/>
            <person name="Ramasamy S."/>
        </authorList>
    </citation>
    <scope>IDENTIFICATION BY MASS SPECTROMETRY</scope>
    <scope>INDUCTION</scope>
    <source>
        <strain>cv. CO43</strain>
        <tissue>Leaf</tissue>
    </source>
</reference>
<evidence type="ECO:0000250" key="1"/>
<evidence type="ECO:0000269" key="2">
    <source>
    </source>
</evidence>
<evidence type="ECO:0000305" key="3"/>
<feature type="chain" id="PRO_0000361772" description="Nucleoside diphosphate kinase 1">
    <location>
        <begin position="1"/>
        <end position="149"/>
    </location>
</feature>
<feature type="active site" description="Pros-phosphohistidine intermediate" evidence="1">
    <location>
        <position position="115"/>
    </location>
</feature>
<feature type="binding site" evidence="1">
    <location>
        <position position="9"/>
    </location>
    <ligand>
        <name>ATP</name>
        <dbReference type="ChEBI" id="CHEBI:30616"/>
    </ligand>
</feature>
<feature type="binding site" evidence="1">
    <location>
        <position position="57"/>
    </location>
    <ligand>
        <name>ATP</name>
        <dbReference type="ChEBI" id="CHEBI:30616"/>
    </ligand>
</feature>
<feature type="binding site" evidence="1">
    <location>
        <position position="85"/>
    </location>
    <ligand>
        <name>ATP</name>
        <dbReference type="ChEBI" id="CHEBI:30616"/>
    </ligand>
</feature>
<feature type="binding site" evidence="1">
    <location>
        <position position="91"/>
    </location>
    <ligand>
        <name>ATP</name>
        <dbReference type="ChEBI" id="CHEBI:30616"/>
    </ligand>
</feature>
<feature type="binding site" evidence="1">
    <location>
        <position position="102"/>
    </location>
    <ligand>
        <name>ATP</name>
        <dbReference type="ChEBI" id="CHEBI:30616"/>
    </ligand>
</feature>
<feature type="binding site" evidence="1">
    <location>
        <position position="112"/>
    </location>
    <ligand>
        <name>ATP</name>
        <dbReference type="ChEBI" id="CHEBI:30616"/>
    </ligand>
</feature>
<feature type="sequence conflict" description="In Ref. 1; EAZ03926." evidence="3" ref="1">
    <original>F</original>
    <variation>Y</variation>
    <location>
        <position position="31"/>
    </location>
</feature>
<name>NDK1_ORYSI</name>
<accession>A6N0M9</accession>
<accession>A2YLG5</accession>
<accession>A6N037</accession>
<protein>
    <recommendedName>
        <fullName>Nucleoside diphosphate kinase 1</fullName>
        <ecNumber>2.7.4.6</ecNumber>
    </recommendedName>
    <alternativeName>
        <fullName>Nucleoside diphosphate kinase I</fullName>
        <shortName>NDK I</shortName>
        <shortName>NDP kinase I</shortName>
        <shortName>NDPK I</shortName>
    </alternativeName>
</protein>
<gene>
    <name type="primary">NDKR</name>
    <name type="ORF">OsI_025158</name>
</gene>
<comment type="function">
    <text>Major role in the synthesis of nucleoside triphosphates other than ATP. The ATP gamma phosphate is transferred to the NDP beta phosphate via a ping-pong mechanism, using a phosphorylated active-site intermediate. This NDK is microtubule-associated.</text>
</comment>
<comment type="catalytic activity">
    <reaction>
        <text>a 2'-deoxyribonucleoside 5'-diphosphate + ATP = a 2'-deoxyribonucleoside 5'-triphosphate + ADP</text>
        <dbReference type="Rhea" id="RHEA:44640"/>
        <dbReference type="ChEBI" id="CHEBI:30616"/>
        <dbReference type="ChEBI" id="CHEBI:61560"/>
        <dbReference type="ChEBI" id="CHEBI:73316"/>
        <dbReference type="ChEBI" id="CHEBI:456216"/>
        <dbReference type="EC" id="2.7.4.6"/>
    </reaction>
</comment>
<comment type="catalytic activity">
    <reaction>
        <text>a ribonucleoside 5'-diphosphate + ATP = a ribonucleoside 5'-triphosphate + ADP</text>
        <dbReference type="Rhea" id="RHEA:18113"/>
        <dbReference type="ChEBI" id="CHEBI:30616"/>
        <dbReference type="ChEBI" id="CHEBI:57930"/>
        <dbReference type="ChEBI" id="CHEBI:61557"/>
        <dbReference type="ChEBI" id="CHEBI:456216"/>
        <dbReference type="EC" id="2.7.4.6"/>
    </reaction>
</comment>
<comment type="cofactor">
    <cofactor evidence="1">
        <name>Mg(2+)</name>
        <dbReference type="ChEBI" id="CHEBI:18420"/>
    </cofactor>
</comment>
<comment type="subunit">
    <text evidence="1">Homohexamer.</text>
</comment>
<comment type="induction">
    <text evidence="2">Up-regulated in the leaf sheaths of rice plants grown from seeds that were inoculated with the nonpathogenic P.fluorescens strain KH-1.</text>
</comment>
<comment type="mass spectrometry"/>
<comment type="similarity">
    <text evidence="3">Belongs to the NDK family.</text>
</comment>
<dbReference type="EC" id="2.7.4.6"/>
<dbReference type="EMBL" id="CM000132">
    <property type="protein sequence ID" value="EAZ03926.1"/>
    <property type="molecule type" value="Genomic_DNA"/>
</dbReference>
<dbReference type="EMBL" id="EF576211">
    <property type="protein sequence ID" value="ABR25799.1"/>
    <property type="molecule type" value="mRNA"/>
</dbReference>
<dbReference type="EMBL" id="EF576019">
    <property type="protein sequence ID" value="ABR25607.1"/>
    <property type="molecule type" value="mRNA"/>
</dbReference>
<dbReference type="SMR" id="A6N0M9"/>
<dbReference type="STRING" id="39946.A6N0M9"/>
<dbReference type="EnsemblPlants" id="OsGoSa_07g0015110.01">
    <property type="protein sequence ID" value="OsGoSa_07g0015110.01"/>
    <property type="gene ID" value="OsGoSa_07g0015110"/>
</dbReference>
<dbReference type="EnsemblPlants" id="OsLaMu_07g0015140.01">
    <property type="protein sequence ID" value="OsLaMu_07g0015140.01"/>
    <property type="gene ID" value="OsLaMu_07g0015140"/>
</dbReference>
<dbReference type="Gramene" id="OsGoSa_07g0015110.01">
    <property type="protein sequence ID" value="OsGoSa_07g0015110.01"/>
    <property type="gene ID" value="OsGoSa_07g0015110"/>
</dbReference>
<dbReference type="Gramene" id="OsLaMu_07g0015140.01">
    <property type="protein sequence ID" value="OsLaMu_07g0015140.01"/>
    <property type="gene ID" value="OsLaMu_07g0015140"/>
</dbReference>
<dbReference type="HOGENOM" id="CLU_060216_6_3_1"/>
<dbReference type="OrthoDB" id="2162449at2759"/>
<dbReference type="Proteomes" id="UP000007015">
    <property type="component" value="Chromosome 7"/>
</dbReference>
<dbReference type="GO" id="GO:0005524">
    <property type="term" value="F:ATP binding"/>
    <property type="evidence" value="ECO:0007669"/>
    <property type="project" value="UniProtKB-KW"/>
</dbReference>
<dbReference type="GO" id="GO:0046872">
    <property type="term" value="F:metal ion binding"/>
    <property type="evidence" value="ECO:0007669"/>
    <property type="project" value="UniProtKB-KW"/>
</dbReference>
<dbReference type="GO" id="GO:0004550">
    <property type="term" value="F:nucleoside diphosphate kinase activity"/>
    <property type="evidence" value="ECO:0007669"/>
    <property type="project" value="UniProtKB-EC"/>
</dbReference>
<dbReference type="GO" id="GO:0006241">
    <property type="term" value="P:CTP biosynthetic process"/>
    <property type="evidence" value="ECO:0007669"/>
    <property type="project" value="InterPro"/>
</dbReference>
<dbReference type="GO" id="GO:0006183">
    <property type="term" value="P:GTP biosynthetic process"/>
    <property type="evidence" value="ECO:0007669"/>
    <property type="project" value="InterPro"/>
</dbReference>
<dbReference type="GO" id="GO:0006228">
    <property type="term" value="P:UTP biosynthetic process"/>
    <property type="evidence" value="ECO:0007669"/>
    <property type="project" value="InterPro"/>
</dbReference>
<dbReference type="CDD" id="cd04413">
    <property type="entry name" value="NDPk_I"/>
    <property type="match status" value="1"/>
</dbReference>
<dbReference type="FunFam" id="3.30.70.141:FF:000002">
    <property type="entry name" value="Nucleoside diphosphate kinase"/>
    <property type="match status" value="1"/>
</dbReference>
<dbReference type="Gene3D" id="3.30.70.141">
    <property type="entry name" value="Nucleoside diphosphate kinase-like domain"/>
    <property type="match status" value="1"/>
</dbReference>
<dbReference type="HAMAP" id="MF_00451">
    <property type="entry name" value="NDP_kinase"/>
    <property type="match status" value="1"/>
</dbReference>
<dbReference type="InterPro" id="IPR034907">
    <property type="entry name" value="NDK-like_dom"/>
</dbReference>
<dbReference type="InterPro" id="IPR036850">
    <property type="entry name" value="NDK-like_dom_sf"/>
</dbReference>
<dbReference type="InterPro" id="IPR001564">
    <property type="entry name" value="Nucleoside_diP_kinase"/>
</dbReference>
<dbReference type="InterPro" id="IPR023005">
    <property type="entry name" value="Nucleoside_diP_kinase_AS"/>
</dbReference>
<dbReference type="NCBIfam" id="NF001908">
    <property type="entry name" value="PRK00668.1"/>
    <property type="match status" value="1"/>
</dbReference>
<dbReference type="PANTHER" id="PTHR11349">
    <property type="entry name" value="NUCLEOSIDE DIPHOSPHATE KINASE"/>
    <property type="match status" value="1"/>
</dbReference>
<dbReference type="Pfam" id="PF00334">
    <property type="entry name" value="NDK"/>
    <property type="match status" value="1"/>
</dbReference>
<dbReference type="PRINTS" id="PR01243">
    <property type="entry name" value="NUCDPKINASE"/>
</dbReference>
<dbReference type="SMART" id="SM00562">
    <property type="entry name" value="NDK"/>
    <property type="match status" value="1"/>
</dbReference>
<dbReference type="SUPFAM" id="SSF54919">
    <property type="entry name" value="Nucleoside diphosphate kinase, NDK"/>
    <property type="match status" value="1"/>
</dbReference>
<dbReference type="PROSITE" id="PS00469">
    <property type="entry name" value="NDPK"/>
    <property type="match status" value="1"/>
</dbReference>
<dbReference type="PROSITE" id="PS51374">
    <property type="entry name" value="NDPK_LIKE"/>
    <property type="match status" value="1"/>
</dbReference>